<protein>
    <recommendedName>
        <fullName evidence="1">Ribonuclease HII</fullName>
        <shortName evidence="1">RNase HII</shortName>
        <ecNumber evidence="1">3.1.26.4</ecNumber>
    </recommendedName>
</protein>
<name>RNH2_AZOVD</name>
<feature type="chain" id="PRO_1000202281" description="Ribonuclease HII">
    <location>
        <begin position="1"/>
        <end position="207"/>
    </location>
</feature>
<feature type="domain" description="RNase H type-2" evidence="2">
    <location>
        <begin position="12"/>
        <end position="201"/>
    </location>
</feature>
<feature type="binding site" evidence="1">
    <location>
        <position position="18"/>
    </location>
    <ligand>
        <name>a divalent metal cation</name>
        <dbReference type="ChEBI" id="CHEBI:60240"/>
    </ligand>
</feature>
<feature type="binding site" evidence="1">
    <location>
        <position position="19"/>
    </location>
    <ligand>
        <name>a divalent metal cation</name>
        <dbReference type="ChEBI" id="CHEBI:60240"/>
    </ligand>
</feature>
<feature type="binding site" evidence="1">
    <location>
        <position position="110"/>
    </location>
    <ligand>
        <name>a divalent metal cation</name>
        <dbReference type="ChEBI" id="CHEBI:60240"/>
    </ligand>
</feature>
<proteinExistence type="inferred from homology"/>
<gene>
    <name evidence="1" type="primary">rnhB</name>
    <name type="ordered locus">Avin_38850</name>
</gene>
<reference key="1">
    <citation type="journal article" date="2009" name="J. Bacteriol.">
        <title>Genome sequence of Azotobacter vinelandii, an obligate aerobe specialized to support diverse anaerobic metabolic processes.</title>
        <authorList>
            <person name="Setubal J.C."/>
            <person name="Dos Santos P."/>
            <person name="Goldman B.S."/>
            <person name="Ertesvaag H."/>
            <person name="Espin G."/>
            <person name="Rubio L.M."/>
            <person name="Valla S."/>
            <person name="Almeida N.F."/>
            <person name="Balasubramanian D."/>
            <person name="Cromes L."/>
            <person name="Curatti L."/>
            <person name="Du Z."/>
            <person name="Godsy E."/>
            <person name="Goodner B."/>
            <person name="Hellner-Burris K."/>
            <person name="Hernandez J.A."/>
            <person name="Houmiel K."/>
            <person name="Imperial J."/>
            <person name="Kennedy C."/>
            <person name="Larson T.J."/>
            <person name="Latreille P."/>
            <person name="Ligon L.S."/>
            <person name="Lu J."/>
            <person name="Maerk M."/>
            <person name="Miller N.M."/>
            <person name="Norton S."/>
            <person name="O'Carroll I.P."/>
            <person name="Paulsen I."/>
            <person name="Raulfs E.C."/>
            <person name="Roemer R."/>
            <person name="Rosser J."/>
            <person name="Segura D."/>
            <person name="Slater S."/>
            <person name="Stricklin S.L."/>
            <person name="Studholme D.J."/>
            <person name="Sun J."/>
            <person name="Viana C.J."/>
            <person name="Wallin E."/>
            <person name="Wang B."/>
            <person name="Wheeler C."/>
            <person name="Zhu H."/>
            <person name="Dean D.R."/>
            <person name="Dixon R."/>
            <person name="Wood D."/>
        </authorList>
    </citation>
    <scope>NUCLEOTIDE SEQUENCE [LARGE SCALE GENOMIC DNA]</scope>
    <source>
        <strain>DJ / ATCC BAA-1303</strain>
    </source>
</reference>
<accession>C1DST2</accession>
<dbReference type="EC" id="3.1.26.4" evidence="1"/>
<dbReference type="EMBL" id="CP001157">
    <property type="protein sequence ID" value="ACO80025.1"/>
    <property type="molecule type" value="Genomic_DNA"/>
</dbReference>
<dbReference type="RefSeq" id="WP_012702400.1">
    <property type="nucleotide sequence ID" value="NC_012560.1"/>
</dbReference>
<dbReference type="SMR" id="C1DST2"/>
<dbReference type="STRING" id="322710.Avin_38850"/>
<dbReference type="EnsemblBacteria" id="ACO80025">
    <property type="protein sequence ID" value="ACO80025"/>
    <property type="gene ID" value="Avin_38850"/>
</dbReference>
<dbReference type="GeneID" id="88186843"/>
<dbReference type="KEGG" id="avn:Avin_38850"/>
<dbReference type="eggNOG" id="COG0164">
    <property type="taxonomic scope" value="Bacteria"/>
</dbReference>
<dbReference type="HOGENOM" id="CLU_036532_3_2_6"/>
<dbReference type="OrthoDB" id="9803420at2"/>
<dbReference type="Proteomes" id="UP000002424">
    <property type="component" value="Chromosome"/>
</dbReference>
<dbReference type="GO" id="GO:0005737">
    <property type="term" value="C:cytoplasm"/>
    <property type="evidence" value="ECO:0007669"/>
    <property type="project" value="UniProtKB-SubCell"/>
</dbReference>
<dbReference type="GO" id="GO:0032299">
    <property type="term" value="C:ribonuclease H2 complex"/>
    <property type="evidence" value="ECO:0007669"/>
    <property type="project" value="TreeGrafter"/>
</dbReference>
<dbReference type="GO" id="GO:0030145">
    <property type="term" value="F:manganese ion binding"/>
    <property type="evidence" value="ECO:0007669"/>
    <property type="project" value="UniProtKB-UniRule"/>
</dbReference>
<dbReference type="GO" id="GO:0003723">
    <property type="term" value="F:RNA binding"/>
    <property type="evidence" value="ECO:0007669"/>
    <property type="project" value="InterPro"/>
</dbReference>
<dbReference type="GO" id="GO:0004523">
    <property type="term" value="F:RNA-DNA hybrid ribonuclease activity"/>
    <property type="evidence" value="ECO:0007669"/>
    <property type="project" value="UniProtKB-UniRule"/>
</dbReference>
<dbReference type="GO" id="GO:0043137">
    <property type="term" value="P:DNA replication, removal of RNA primer"/>
    <property type="evidence" value="ECO:0007669"/>
    <property type="project" value="TreeGrafter"/>
</dbReference>
<dbReference type="GO" id="GO:0006298">
    <property type="term" value="P:mismatch repair"/>
    <property type="evidence" value="ECO:0007669"/>
    <property type="project" value="TreeGrafter"/>
</dbReference>
<dbReference type="CDD" id="cd07182">
    <property type="entry name" value="RNase_HII_bacteria_HII_like"/>
    <property type="match status" value="1"/>
</dbReference>
<dbReference type="FunFam" id="3.30.420.10:FF:000006">
    <property type="entry name" value="Ribonuclease HII"/>
    <property type="match status" value="1"/>
</dbReference>
<dbReference type="Gene3D" id="3.30.420.10">
    <property type="entry name" value="Ribonuclease H-like superfamily/Ribonuclease H"/>
    <property type="match status" value="1"/>
</dbReference>
<dbReference type="HAMAP" id="MF_00052_B">
    <property type="entry name" value="RNase_HII_B"/>
    <property type="match status" value="1"/>
</dbReference>
<dbReference type="InterPro" id="IPR022898">
    <property type="entry name" value="RNase_HII"/>
</dbReference>
<dbReference type="InterPro" id="IPR001352">
    <property type="entry name" value="RNase_HII/HIII"/>
</dbReference>
<dbReference type="InterPro" id="IPR024567">
    <property type="entry name" value="RNase_HII/HIII_dom"/>
</dbReference>
<dbReference type="InterPro" id="IPR012337">
    <property type="entry name" value="RNaseH-like_sf"/>
</dbReference>
<dbReference type="InterPro" id="IPR036397">
    <property type="entry name" value="RNaseH_sf"/>
</dbReference>
<dbReference type="NCBIfam" id="NF000594">
    <property type="entry name" value="PRK00015.1-1"/>
    <property type="match status" value="1"/>
</dbReference>
<dbReference type="NCBIfam" id="NF000595">
    <property type="entry name" value="PRK00015.1-3"/>
    <property type="match status" value="1"/>
</dbReference>
<dbReference type="NCBIfam" id="NF000596">
    <property type="entry name" value="PRK00015.1-4"/>
    <property type="match status" value="1"/>
</dbReference>
<dbReference type="PANTHER" id="PTHR10954">
    <property type="entry name" value="RIBONUCLEASE H2 SUBUNIT A"/>
    <property type="match status" value="1"/>
</dbReference>
<dbReference type="PANTHER" id="PTHR10954:SF18">
    <property type="entry name" value="RIBONUCLEASE HII"/>
    <property type="match status" value="1"/>
</dbReference>
<dbReference type="Pfam" id="PF01351">
    <property type="entry name" value="RNase_HII"/>
    <property type="match status" value="1"/>
</dbReference>
<dbReference type="SUPFAM" id="SSF53098">
    <property type="entry name" value="Ribonuclease H-like"/>
    <property type="match status" value="1"/>
</dbReference>
<dbReference type="PROSITE" id="PS51975">
    <property type="entry name" value="RNASE_H_2"/>
    <property type="match status" value="1"/>
</dbReference>
<comment type="function">
    <text evidence="1">Endonuclease that specifically degrades the RNA of RNA-DNA hybrids.</text>
</comment>
<comment type="catalytic activity">
    <reaction evidence="1">
        <text>Endonucleolytic cleavage to 5'-phosphomonoester.</text>
        <dbReference type="EC" id="3.1.26.4"/>
    </reaction>
</comment>
<comment type="cofactor">
    <cofactor evidence="1">
        <name>Mn(2+)</name>
        <dbReference type="ChEBI" id="CHEBI:29035"/>
    </cofactor>
    <cofactor evidence="1">
        <name>Mg(2+)</name>
        <dbReference type="ChEBI" id="CHEBI:18420"/>
    </cofactor>
    <text evidence="1">Manganese or magnesium. Binds 1 divalent metal ion per monomer in the absence of substrate. May bind a second metal ion after substrate binding.</text>
</comment>
<comment type="subcellular location">
    <subcellularLocation>
        <location evidence="1">Cytoplasm</location>
    </subcellularLocation>
</comment>
<comment type="similarity">
    <text evidence="1">Belongs to the RNase HII family.</text>
</comment>
<sequence>MQLGLDFGRVEALVAGVDEVGRGPLCGAVVTAAVILDPERPILGLNDSKKLSEARREALSEEIREKALAWCIARAEVEEIDRLNILHATMLAMRRAVEGLAVTPRLALIDGNRCPKLAVPCAPVIKGDAQVPAIAAASILAKVARDREMLVLDALYPGYGLARHKGYPTAVHLEALARLGPTPIHRRSFAPVRELLDVVSIPCAPTS</sequence>
<keyword id="KW-0963">Cytoplasm</keyword>
<keyword id="KW-0255">Endonuclease</keyword>
<keyword id="KW-0378">Hydrolase</keyword>
<keyword id="KW-0464">Manganese</keyword>
<keyword id="KW-0479">Metal-binding</keyword>
<keyword id="KW-0540">Nuclease</keyword>
<organism>
    <name type="scientific">Azotobacter vinelandii (strain DJ / ATCC BAA-1303)</name>
    <dbReference type="NCBI Taxonomy" id="322710"/>
    <lineage>
        <taxon>Bacteria</taxon>
        <taxon>Pseudomonadati</taxon>
        <taxon>Pseudomonadota</taxon>
        <taxon>Gammaproteobacteria</taxon>
        <taxon>Pseudomonadales</taxon>
        <taxon>Pseudomonadaceae</taxon>
        <taxon>Azotobacter</taxon>
    </lineage>
</organism>
<evidence type="ECO:0000255" key="1">
    <source>
        <dbReference type="HAMAP-Rule" id="MF_00052"/>
    </source>
</evidence>
<evidence type="ECO:0000255" key="2">
    <source>
        <dbReference type="PROSITE-ProRule" id="PRU01319"/>
    </source>
</evidence>